<evidence type="ECO:0000255" key="1">
    <source>
        <dbReference type="HAMAP-Rule" id="MF_01220"/>
    </source>
</evidence>
<feature type="chain" id="PRO_0000323970" description="Uridylate kinase">
    <location>
        <begin position="1"/>
        <end position="235"/>
    </location>
</feature>
<feature type="region of interest" description="Involved in allosteric activation by GTP" evidence="1">
    <location>
        <begin position="17"/>
        <end position="22"/>
    </location>
</feature>
<feature type="binding site" evidence="1">
    <location>
        <begin position="9"/>
        <end position="12"/>
    </location>
    <ligand>
        <name>ATP</name>
        <dbReference type="ChEBI" id="CHEBI:30616"/>
    </ligand>
</feature>
<feature type="binding site" evidence="1">
    <location>
        <position position="51"/>
    </location>
    <ligand>
        <name>UMP</name>
        <dbReference type="ChEBI" id="CHEBI:57865"/>
    </ligand>
</feature>
<feature type="binding site" evidence="1">
    <location>
        <position position="52"/>
    </location>
    <ligand>
        <name>ATP</name>
        <dbReference type="ChEBI" id="CHEBI:30616"/>
    </ligand>
</feature>
<feature type="binding site" evidence="1">
    <location>
        <position position="56"/>
    </location>
    <ligand>
        <name>ATP</name>
        <dbReference type="ChEBI" id="CHEBI:30616"/>
    </ligand>
</feature>
<feature type="binding site" evidence="1">
    <location>
        <position position="71"/>
    </location>
    <ligand>
        <name>UMP</name>
        <dbReference type="ChEBI" id="CHEBI:57865"/>
    </ligand>
</feature>
<feature type="binding site" evidence="1">
    <location>
        <begin position="132"/>
        <end position="139"/>
    </location>
    <ligand>
        <name>UMP</name>
        <dbReference type="ChEBI" id="CHEBI:57865"/>
    </ligand>
</feature>
<feature type="binding site" evidence="1">
    <location>
        <position position="159"/>
    </location>
    <ligand>
        <name>ATP</name>
        <dbReference type="ChEBI" id="CHEBI:30616"/>
    </ligand>
</feature>
<feature type="binding site" evidence="1">
    <location>
        <position position="165"/>
    </location>
    <ligand>
        <name>ATP</name>
        <dbReference type="ChEBI" id="CHEBI:30616"/>
    </ligand>
</feature>
<feature type="binding site" evidence="1">
    <location>
        <position position="168"/>
    </location>
    <ligand>
        <name>ATP</name>
        <dbReference type="ChEBI" id="CHEBI:30616"/>
    </ligand>
</feature>
<organism>
    <name type="scientific">Synechococcus sp. (strain WH7803)</name>
    <dbReference type="NCBI Taxonomy" id="32051"/>
    <lineage>
        <taxon>Bacteria</taxon>
        <taxon>Bacillati</taxon>
        <taxon>Cyanobacteriota</taxon>
        <taxon>Cyanophyceae</taxon>
        <taxon>Synechococcales</taxon>
        <taxon>Synechococcaceae</taxon>
        <taxon>Synechococcus</taxon>
    </lineage>
</organism>
<gene>
    <name evidence="1" type="primary">pyrH</name>
    <name type="ordered locus">SynWH7803_0639</name>
</gene>
<accession>A5GJF0</accession>
<reference key="1">
    <citation type="submission" date="2006-05" db="EMBL/GenBank/DDBJ databases">
        <authorList>
            <consortium name="Genoscope"/>
        </authorList>
    </citation>
    <scope>NUCLEOTIDE SEQUENCE [LARGE SCALE GENOMIC DNA]</scope>
    <source>
        <strain>WH7803</strain>
    </source>
</reference>
<keyword id="KW-0021">Allosteric enzyme</keyword>
<keyword id="KW-0067">ATP-binding</keyword>
<keyword id="KW-0963">Cytoplasm</keyword>
<keyword id="KW-0418">Kinase</keyword>
<keyword id="KW-0547">Nucleotide-binding</keyword>
<keyword id="KW-0665">Pyrimidine biosynthesis</keyword>
<keyword id="KW-1185">Reference proteome</keyword>
<keyword id="KW-0808">Transferase</keyword>
<name>PYRH_SYNPW</name>
<sequence>MAYARALLKLSGEALMGDQGYGIDPAIVQAIAKDVAGVVASGTQLAIVVGGGNIFRGLKGSAAGMDRATADYVGMLATVMNAITLQDGLERAGIPTRVQTAIEMQEVAEPYIRRRAIRHLEKGRVVVFGAGCGNPFFTTDTTAALRAAEISADVVFKATKVDGVYDKDPHKYADAVRYDTLTFQQVLSGELAVMDSTAIALCKDNNIPIVVFNLFEAGNIGRAVAGEPIGSRISN</sequence>
<dbReference type="EC" id="2.7.4.22" evidence="1"/>
<dbReference type="EMBL" id="CT971583">
    <property type="protein sequence ID" value="CAK23065.1"/>
    <property type="molecule type" value="Genomic_DNA"/>
</dbReference>
<dbReference type="SMR" id="A5GJF0"/>
<dbReference type="STRING" id="32051.SynWH7803_0639"/>
<dbReference type="KEGG" id="syx:SynWH7803_0639"/>
<dbReference type="eggNOG" id="COG0528">
    <property type="taxonomic scope" value="Bacteria"/>
</dbReference>
<dbReference type="HOGENOM" id="CLU_033861_0_0_3"/>
<dbReference type="OrthoDB" id="9807458at2"/>
<dbReference type="UniPathway" id="UPA00159">
    <property type="reaction ID" value="UER00275"/>
</dbReference>
<dbReference type="Proteomes" id="UP000001566">
    <property type="component" value="Chromosome"/>
</dbReference>
<dbReference type="GO" id="GO:0005737">
    <property type="term" value="C:cytoplasm"/>
    <property type="evidence" value="ECO:0007669"/>
    <property type="project" value="UniProtKB-SubCell"/>
</dbReference>
<dbReference type="GO" id="GO:0005524">
    <property type="term" value="F:ATP binding"/>
    <property type="evidence" value="ECO:0007669"/>
    <property type="project" value="UniProtKB-KW"/>
</dbReference>
<dbReference type="GO" id="GO:0033862">
    <property type="term" value="F:UMP kinase activity"/>
    <property type="evidence" value="ECO:0007669"/>
    <property type="project" value="UniProtKB-EC"/>
</dbReference>
<dbReference type="GO" id="GO:0044210">
    <property type="term" value="P:'de novo' CTP biosynthetic process"/>
    <property type="evidence" value="ECO:0007669"/>
    <property type="project" value="UniProtKB-UniRule"/>
</dbReference>
<dbReference type="GO" id="GO:0006225">
    <property type="term" value="P:UDP biosynthetic process"/>
    <property type="evidence" value="ECO:0007669"/>
    <property type="project" value="TreeGrafter"/>
</dbReference>
<dbReference type="CDD" id="cd04254">
    <property type="entry name" value="AAK_UMPK-PyrH-Ec"/>
    <property type="match status" value="1"/>
</dbReference>
<dbReference type="FunFam" id="3.40.1160.10:FF:000001">
    <property type="entry name" value="Uridylate kinase"/>
    <property type="match status" value="1"/>
</dbReference>
<dbReference type="Gene3D" id="3.40.1160.10">
    <property type="entry name" value="Acetylglutamate kinase-like"/>
    <property type="match status" value="1"/>
</dbReference>
<dbReference type="HAMAP" id="MF_01220_B">
    <property type="entry name" value="PyrH_B"/>
    <property type="match status" value="1"/>
</dbReference>
<dbReference type="InterPro" id="IPR036393">
    <property type="entry name" value="AceGlu_kinase-like_sf"/>
</dbReference>
<dbReference type="InterPro" id="IPR001048">
    <property type="entry name" value="Asp/Glu/Uridylate_kinase"/>
</dbReference>
<dbReference type="InterPro" id="IPR011817">
    <property type="entry name" value="Uridylate_kinase"/>
</dbReference>
<dbReference type="InterPro" id="IPR015963">
    <property type="entry name" value="Uridylate_kinase_bac"/>
</dbReference>
<dbReference type="NCBIfam" id="TIGR02075">
    <property type="entry name" value="pyrH_bact"/>
    <property type="match status" value="1"/>
</dbReference>
<dbReference type="PANTHER" id="PTHR42833">
    <property type="entry name" value="URIDYLATE KINASE"/>
    <property type="match status" value="1"/>
</dbReference>
<dbReference type="PANTHER" id="PTHR42833:SF4">
    <property type="entry name" value="URIDYLATE KINASE PUMPKIN, CHLOROPLASTIC"/>
    <property type="match status" value="1"/>
</dbReference>
<dbReference type="Pfam" id="PF00696">
    <property type="entry name" value="AA_kinase"/>
    <property type="match status" value="1"/>
</dbReference>
<dbReference type="PIRSF" id="PIRSF005650">
    <property type="entry name" value="Uridylate_kin"/>
    <property type="match status" value="1"/>
</dbReference>
<dbReference type="SUPFAM" id="SSF53633">
    <property type="entry name" value="Carbamate kinase-like"/>
    <property type="match status" value="1"/>
</dbReference>
<comment type="function">
    <text evidence="1">Catalyzes the reversible phosphorylation of UMP to UDP.</text>
</comment>
<comment type="catalytic activity">
    <reaction evidence="1">
        <text>UMP + ATP = UDP + ADP</text>
        <dbReference type="Rhea" id="RHEA:24400"/>
        <dbReference type="ChEBI" id="CHEBI:30616"/>
        <dbReference type="ChEBI" id="CHEBI:57865"/>
        <dbReference type="ChEBI" id="CHEBI:58223"/>
        <dbReference type="ChEBI" id="CHEBI:456216"/>
        <dbReference type="EC" id="2.7.4.22"/>
    </reaction>
</comment>
<comment type="activity regulation">
    <text evidence="1">Allosterically activated by GTP. Inhibited by UTP.</text>
</comment>
<comment type="pathway">
    <text evidence="1">Pyrimidine metabolism; CTP biosynthesis via de novo pathway; UDP from UMP (UMPK route): step 1/1.</text>
</comment>
<comment type="subunit">
    <text evidence="1">Homohexamer.</text>
</comment>
<comment type="subcellular location">
    <subcellularLocation>
        <location evidence="1">Cytoplasm</location>
    </subcellularLocation>
</comment>
<comment type="similarity">
    <text evidence="1">Belongs to the UMP kinase family.</text>
</comment>
<proteinExistence type="inferred from homology"/>
<protein>
    <recommendedName>
        <fullName evidence="1">Uridylate kinase</fullName>
        <shortName evidence="1">UK</shortName>
        <ecNumber evidence="1">2.7.4.22</ecNumber>
    </recommendedName>
    <alternativeName>
        <fullName evidence="1">Uridine monophosphate kinase</fullName>
        <shortName evidence="1">UMP kinase</shortName>
        <shortName evidence="1">UMPK</shortName>
    </alternativeName>
</protein>